<sequence>MTSFVRGGFVENRKFRINQFIKVPEVRLVDFDGTMIGVIKTADALAKAQAKDLDLVEISPQANPPVCRIINFSKFKYEMEKKEKEARKKQKIFHIKEVRIRPRISDHDLEVKIKHAREFIDGGDKVQLTALFSGREMQHKDLGIKIMERIKESLADIACPERKVYSMGMRVFLTLVPKNKIK</sequence>
<reference key="1">
    <citation type="journal article" date="2008" name="Proc. Natl. Acad. Sci. U.S.A.">
        <title>Complete genome of the uncultured termite group 1 bacteria in a single host protist cell.</title>
        <authorList>
            <person name="Hongoh Y."/>
            <person name="Sharma V.K."/>
            <person name="Prakash T."/>
            <person name="Noda S."/>
            <person name="Taylor T.D."/>
            <person name="Kudo T."/>
            <person name="Sakaki Y."/>
            <person name="Toyoda A."/>
            <person name="Hattori M."/>
            <person name="Ohkuma M."/>
        </authorList>
    </citation>
    <scope>NUCLEOTIDE SEQUENCE [LARGE SCALE GENOMIC DNA]</scope>
</reference>
<comment type="function">
    <text evidence="1">IF-3 binds to the 30S ribosomal subunit and shifts the equilibrium between 70S ribosomes and their 50S and 30S subunits in favor of the free subunits, thus enhancing the availability of 30S subunits on which protein synthesis initiation begins.</text>
</comment>
<comment type="subunit">
    <text evidence="1">Monomer.</text>
</comment>
<comment type="subcellular location">
    <subcellularLocation>
        <location evidence="1">Cytoplasm</location>
    </subcellularLocation>
</comment>
<comment type="similarity">
    <text evidence="1">Belongs to the IF-3 family.</text>
</comment>
<organism>
    <name type="scientific">Endomicrobium trichonymphae</name>
    <dbReference type="NCBI Taxonomy" id="1408204"/>
    <lineage>
        <taxon>Bacteria</taxon>
        <taxon>Pseudomonadati</taxon>
        <taxon>Elusimicrobiota</taxon>
        <taxon>Endomicrobiia</taxon>
        <taxon>Endomicrobiales</taxon>
        <taxon>Endomicrobiaceae</taxon>
        <taxon>Candidatus Endomicrobiellum</taxon>
    </lineage>
</organism>
<proteinExistence type="inferred from homology"/>
<keyword id="KW-0963">Cytoplasm</keyword>
<keyword id="KW-0396">Initiation factor</keyword>
<keyword id="KW-0648">Protein biosynthesis</keyword>
<gene>
    <name evidence="1" type="primary">infC</name>
    <name type="ordered locus">TGRD_291</name>
</gene>
<protein>
    <recommendedName>
        <fullName evidence="1">Translation initiation factor IF-3</fullName>
    </recommendedName>
</protein>
<name>IF3_ENDTX</name>
<dbReference type="EMBL" id="AP009510">
    <property type="protein sequence ID" value="BAG13774.1"/>
    <property type="molecule type" value="Genomic_DNA"/>
</dbReference>
<dbReference type="RefSeq" id="WP_015423301.1">
    <property type="nucleotide sequence ID" value="NC_020419.1"/>
</dbReference>
<dbReference type="SMR" id="B1GZU2"/>
<dbReference type="STRING" id="471821.TGRD_291"/>
<dbReference type="KEGG" id="rsd:TGRD_291"/>
<dbReference type="PATRIC" id="fig|471821.5.peg.449"/>
<dbReference type="HOGENOM" id="CLU_054919_3_2_0"/>
<dbReference type="Proteomes" id="UP000001691">
    <property type="component" value="Chromosome"/>
</dbReference>
<dbReference type="GO" id="GO:0005829">
    <property type="term" value="C:cytosol"/>
    <property type="evidence" value="ECO:0007669"/>
    <property type="project" value="TreeGrafter"/>
</dbReference>
<dbReference type="GO" id="GO:0016020">
    <property type="term" value="C:membrane"/>
    <property type="evidence" value="ECO:0007669"/>
    <property type="project" value="TreeGrafter"/>
</dbReference>
<dbReference type="GO" id="GO:0043022">
    <property type="term" value="F:ribosome binding"/>
    <property type="evidence" value="ECO:0007669"/>
    <property type="project" value="TreeGrafter"/>
</dbReference>
<dbReference type="GO" id="GO:0003743">
    <property type="term" value="F:translation initiation factor activity"/>
    <property type="evidence" value="ECO:0007669"/>
    <property type="project" value="UniProtKB-UniRule"/>
</dbReference>
<dbReference type="GO" id="GO:0032790">
    <property type="term" value="P:ribosome disassembly"/>
    <property type="evidence" value="ECO:0007669"/>
    <property type="project" value="TreeGrafter"/>
</dbReference>
<dbReference type="FunFam" id="3.10.20.80:FF:000001">
    <property type="entry name" value="Translation initiation factor IF-3"/>
    <property type="match status" value="1"/>
</dbReference>
<dbReference type="FunFam" id="3.30.110.10:FF:000001">
    <property type="entry name" value="Translation initiation factor IF-3"/>
    <property type="match status" value="1"/>
</dbReference>
<dbReference type="Gene3D" id="3.30.110.10">
    <property type="entry name" value="Translation initiation factor 3 (IF-3), C-terminal domain"/>
    <property type="match status" value="1"/>
</dbReference>
<dbReference type="Gene3D" id="3.10.20.80">
    <property type="entry name" value="Translation initiation factor 3 (IF-3), N-terminal domain"/>
    <property type="match status" value="1"/>
</dbReference>
<dbReference type="HAMAP" id="MF_00080">
    <property type="entry name" value="IF_3"/>
    <property type="match status" value="1"/>
</dbReference>
<dbReference type="InterPro" id="IPR036788">
    <property type="entry name" value="T_IF-3_C_sf"/>
</dbReference>
<dbReference type="InterPro" id="IPR036787">
    <property type="entry name" value="T_IF-3_N_sf"/>
</dbReference>
<dbReference type="InterPro" id="IPR019813">
    <property type="entry name" value="Translation_initiation_fac3_CS"/>
</dbReference>
<dbReference type="InterPro" id="IPR001288">
    <property type="entry name" value="Translation_initiation_fac_3"/>
</dbReference>
<dbReference type="InterPro" id="IPR019815">
    <property type="entry name" value="Translation_initiation_fac_3_C"/>
</dbReference>
<dbReference type="InterPro" id="IPR019814">
    <property type="entry name" value="Translation_initiation_fac_3_N"/>
</dbReference>
<dbReference type="NCBIfam" id="TIGR00168">
    <property type="entry name" value="infC"/>
    <property type="match status" value="1"/>
</dbReference>
<dbReference type="PANTHER" id="PTHR10938">
    <property type="entry name" value="TRANSLATION INITIATION FACTOR IF-3"/>
    <property type="match status" value="1"/>
</dbReference>
<dbReference type="PANTHER" id="PTHR10938:SF0">
    <property type="entry name" value="TRANSLATION INITIATION FACTOR IF-3, MITOCHONDRIAL"/>
    <property type="match status" value="1"/>
</dbReference>
<dbReference type="Pfam" id="PF00707">
    <property type="entry name" value="IF3_C"/>
    <property type="match status" value="1"/>
</dbReference>
<dbReference type="Pfam" id="PF05198">
    <property type="entry name" value="IF3_N"/>
    <property type="match status" value="1"/>
</dbReference>
<dbReference type="SUPFAM" id="SSF55200">
    <property type="entry name" value="Translation initiation factor IF3, C-terminal domain"/>
    <property type="match status" value="1"/>
</dbReference>
<dbReference type="SUPFAM" id="SSF54364">
    <property type="entry name" value="Translation initiation factor IF3, N-terminal domain"/>
    <property type="match status" value="1"/>
</dbReference>
<dbReference type="PROSITE" id="PS00938">
    <property type="entry name" value="IF3"/>
    <property type="match status" value="1"/>
</dbReference>
<evidence type="ECO:0000255" key="1">
    <source>
        <dbReference type="HAMAP-Rule" id="MF_00080"/>
    </source>
</evidence>
<feature type="chain" id="PRO_1000118280" description="Translation initiation factor IF-3">
    <location>
        <begin position="1"/>
        <end position="182"/>
    </location>
</feature>
<accession>B1GZU2</accession>